<keyword id="KW-0012">Acyltransferase</keyword>
<keyword id="KW-0963">Cytoplasm</keyword>
<keyword id="KW-0276">Fatty acid metabolism</keyword>
<keyword id="KW-0442">Lipid degradation</keyword>
<keyword id="KW-0443">Lipid metabolism</keyword>
<keyword id="KW-0808">Transferase</keyword>
<feature type="chain" id="PRO_1000185980" description="3-ketoacyl-CoA thiolase">
    <location>
        <begin position="1"/>
        <end position="436"/>
    </location>
</feature>
<feature type="active site" description="Acyl-thioester intermediate" evidence="1">
    <location>
        <position position="99"/>
    </location>
</feature>
<feature type="active site" description="Proton acceptor" evidence="1">
    <location>
        <position position="392"/>
    </location>
</feature>
<feature type="active site" description="Proton acceptor" evidence="1">
    <location>
        <position position="422"/>
    </location>
</feature>
<sequence length="436" mass="46678">MSERQQLTNARGERIAIVSGLRTPFAKQATAFHGVSALDMGKMVVNELISRSELDPKLIEQLVYGQVVQMPAAPNIAREIVLGTGMDISTDAYSVTRACATSFQSTVNVAESILTGNMEIGIAGGSDSSSVLPIGVSKKLAHALVDLNKARSFGQKLSIFRRLGLKDLLPVPPAVAEYSTGLSMGQTAEQMAKTYNISRADQDALAHRSHTLATETWNAGKLAEEVMAAHVPPYKAFIDRDNNIRENSKLESYAKLRPAFDRKHGSVTAANSTPLTDGASAVLLMSEGRAKALGYTPIGYIKSYAFTAIDVWEDMLMGPSYATPMALKRAGMELEDLTLIEMHEAFAAQTLANMQMFGSKKFAEEKLGRNRAIGEIDMSKFNVLGGSLAYGHPFAATGTRLITQVCHELKRRGGGTGLATACAAGGLGAAMIVEVE</sequence>
<proteinExistence type="inferred from homology"/>
<organism>
    <name type="scientific">Shewanella piezotolerans (strain WP3 / JCM 13877)</name>
    <dbReference type="NCBI Taxonomy" id="225849"/>
    <lineage>
        <taxon>Bacteria</taxon>
        <taxon>Pseudomonadati</taxon>
        <taxon>Pseudomonadota</taxon>
        <taxon>Gammaproteobacteria</taxon>
        <taxon>Alteromonadales</taxon>
        <taxon>Shewanellaceae</taxon>
        <taxon>Shewanella</taxon>
    </lineage>
</organism>
<evidence type="ECO:0000255" key="1">
    <source>
        <dbReference type="HAMAP-Rule" id="MF_01618"/>
    </source>
</evidence>
<reference key="1">
    <citation type="journal article" date="2008" name="PLoS ONE">
        <title>Environmental adaptation: genomic analysis of the piezotolerant and psychrotolerant deep-sea iron reducing bacterium Shewanella piezotolerans WP3.</title>
        <authorList>
            <person name="Wang F."/>
            <person name="Wang J."/>
            <person name="Jian H."/>
            <person name="Zhang B."/>
            <person name="Li S."/>
            <person name="Wang F."/>
            <person name="Zeng X."/>
            <person name="Gao L."/>
            <person name="Bartlett D.H."/>
            <person name="Yu J."/>
            <person name="Hu S."/>
            <person name="Xiao X."/>
        </authorList>
    </citation>
    <scope>NUCLEOTIDE SEQUENCE [LARGE SCALE GENOMIC DNA]</scope>
    <source>
        <strain>WP3 / JCM 13877</strain>
    </source>
</reference>
<protein>
    <recommendedName>
        <fullName evidence="1">3-ketoacyl-CoA thiolase</fullName>
        <ecNumber evidence="1">2.3.1.16</ecNumber>
    </recommendedName>
    <alternativeName>
        <fullName evidence="1">ACSs</fullName>
    </alternativeName>
    <alternativeName>
        <fullName evidence="1">Acetyl-CoA acyltransferase</fullName>
    </alternativeName>
    <alternativeName>
        <fullName evidence="1">Acyl-CoA ligase</fullName>
    </alternativeName>
    <alternativeName>
        <fullName evidence="1">Beta-ketothiolase</fullName>
    </alternativeName>
    <alternativeName>
        <fullName evidence="1">Fatty acid oxidation complex subunit beta</fullName>
    </alternativeName>
</protein>
<dbReference type="EC" id="2.3.1.16" evidence="1"/>
<dbReference type="EMBL" id="CP000472">
    <property type="protein sequence ID" value="ACJ29850.1"/>
    <property type="molecule type" value="Genomic_DNA"/>
</dbReference>
<dbReference type="RefSeq" id="WP_020913201.1">
    <property type="nucleotide sequence ID" value="NC_011566.1"/>
</dbReference>
<dbReference type="SMR" id="B8CPY7"/>
<dbReference type="STRING" id="225849.swp_3140"/>
<dbReference type="KEGG" id="swp:swp_3140"/>
<dbReference type="eggNOG" id="COG0183">
    <property type="taxonomic scope" value="Bacteria"/>
</dbReference>
<dbReference type="HOGENOM" id="CLU_031026_2_0_6"/>
<dbReference type="OrthoDB" id="1402717at2"/>
<dbReference type="UniPathway" id="UPA00659"/>
<dbReference type="Proteomes" id="UP000000753">
    <property type="component" value="Chromosome"/>
</dbReference>
<dbReference type="GO" id="GO:0005829">
    <property type="term" value="C:cytosol"/>
    <property type="evidence" value="ECO:0007669"/>
    <property type="project" value="TreeGrafter"/>
</dbReference>
<dbReference type="GO" id="GO:0003988">
    <property type="term" value="F:acetyl-CoA C-acyltransferase activity"/>
    <property type="evidence" value="ECO:0007669"/>
    <property type="project" value="UniProtKB-UniRule"/>
</dbReference>
<dbReference type="GO" id="GO:0006635">
    <property type="term" value="P:fatty acid beta-oxidation"/>
    <property type="evidence" value="ECO:0007669"/>
    <property type="project" value="UniProtKB-UniRule"/>
</dbReference>
<dbReference type="CDD" id="cd00751">
    <property type="entry name" value="thiolase"/>
    <property type="match status" value="1"/>
</dbReference>
<dbReference type="FunFam" id="3.40.47.10:FF:000011">
    <property type="entry name" value="3-ketoacyl-CoA thiolase"/>
    <property type="match status" value="1"/>
</dbReference>
<dbReference type="Gene3D" id="3.40.47.10">
    <property type="match status" value="1"/>
</dbReference>
<dbReference type="HAMAP" id="MF_01618">
    <property type="entry name" value="FadI"/>
    <property type="match status" value="1"/>
</dbReference>
<dbReference type="InterPro" id="IPR012806">
    <property type="entry name" value="Ac-CoA_C-AcTrfase_FadI"/>
</dbReference>
<dbReference type="InterPro" id="IPR002155">
    <property type="entry name" value="Thiolase"/>
</dbReference>
<dbReference type="InterPro" id="IPR016039">
    <property type="entry name" value="Thiolase-like"/>
</dbReference>
<dbReference type="InterPro" id="IPR020610">
    <property type="entry name" value="Thiolase_AS"/>
</dbReference>
<dbReference type="InterPro" id="IPR020617">
    <property type="entry name" value="Thiolase_C"/>
</dbReference>
<dbReference type="InterPro" id="IPR020613">
    <property type="entry name" value="Thiolase_CS"/>
</dbReference>
<dbReference type="InterPro" id="IPR020616">
    <property type="entry name" value="Thiolase_N"/>
</dbReference>
<dbReference type="NCBIfam" id="TIGR01930">
    <property type="entry name" value="AcCoA-C-Actrans"/>
    <property type="match status" value="1"/>
</dbReference>
<dbReference type="NCBIfam" id="TIGR02446">
    <property type="entry name" value="FadI"/>
    <property type="match status" value="1"/>
</dbReference>
<dbReference type="NCBIfam" id="NF006516">
    <property type="entry name" value="PRK08963.1"/>
    <property type="match status" value="1"/>
</dbReference>
<dbReference type="PANTHER" id="PTHR18919:SF107">
    <property type="entry name" value="ACETYL-COA ACETYLTRANSFERASE, CYTOSOLIC"/>
    <property type="match status" value="1"/>
</dbReference>
<dbReference type="PANTHER" id="PTHR18919">
    <property type="entry name" value="ACETYL-COA C-ACYLTRANSFERASE"/>
    <property type="match status" value="1"/>
</dbReference>
<dbReference type="Pfam" id="PF02803">
    <property type="entry name" value="Thiolase_C"/>
    <property type="match status" value="1"/>
</dbReference>
<dbReference type="Pfam" id="PF00108">
    <property type="entry name" value="Thiolase_N"/>
    <property type="match status" value="1"/>
</dbReference>
<dbReference type="PIRSF" id="PIRSF000429">
    <property type="entry name" value="Ac-CoA_Ac_transf"/>
    <property type="match status" value="1"/>
</dbReference>
<dbReference type="SUPFAM" id="SSF53901">
    <property type="entry name" value="Thiolase-like"/>
    <property type="match status" value="2"/>
</dbReference>
<dbReference type="PROSITE" id="PS00737">
    <property type="entry name" value="THIOLASE_2"/>
    <property type="match status" value="1"/>
</dbReference>
<dbReference type="PROSITE" id="PS00099">
    <property type="entry name" value="THIOLASE_3"/>
    <property type="match status" value="1"/>
</dbReference>
<gene>
    <name evidence="1" type="primary">fadI</name>
    <name type="ordered locus">swp_3140</name>
</gene>
<comment type="function">
    <text evidence="1">Catalyzes the final step of fatty acid oxidation in which acetyl-CoA is released and the CoA ester of a fatty acid two carbons shorter is formed.</text>
</comment>
<comment type="catalytic activity">
    <reaction evidence="1">
        <text>an acyl-CoA + acetyl-CoA = a 3-oxoacyl-CoA + CoA</text>
        <dbReference type="Rhea" id="RHEA:21564"/>
        <dbReference type="ChEBI" id="CHEBI:57287"/>
        <dbReference type="ChEBI" id="CHEBI:57288"/>
        <dbReference type="ChEBI" id="CHEBI:58342"/>
        <dbReference type="ChEBI" id="CHEBI:90726"/>
        <dbReference type="EC" id="2.3.1.16"/>
    </reaction>
</comment>
<comment type="pathway">
    <text evidence="1">Lipid metabolism; fatty acid beta-oxidation.</text>
</comment>
<comment type="subunit">
    <text evidence="1">Heterotetramer of two alpha chains (FadJ) and two beta chains (FadI).</text>
</comment>
<comment type="subcellular location">
    <subcellularLocation>
        <location evidence="1">Cytoplasm</location>
    </subcellularLocation>
</comment>
<comment type="similarity">
    <text evidence="1">Belongs to the thiolase-like superfamily. Thiolase family.</text>
</comment>
<accession>B8CPY7</accession>
<name>FADI_SHEPW</name>